<name>YD215_YEAST</name>
<accession>Q12240</accession>
<accession>A0A1S0T064</accession>
<comment type="subcellular location">
    <subcellularLocation>
        <location evidence="3">Membrane</location>
        <topology evidence="3">Single-pass membrane protein</topology>
    </subcellularLocation>
</comment>
<comment type="sequence caution" evidence="3">
    <conflict type="frameshift">
        <sequence resource="EMBL-CDS" id="CAA92358"/>
    </conflict>
</comment>
<comment type="sequence caution" evidence="3">
    <conflict type="frameshift">
        <sequence resource="EMBL-CDS" id="CAA92366"/>
    </conflict>
</comment>
<protein>
    <recommendedName>
        <fullName>Uncharacterized protein YDR215C</fullName>
    </recommendedName>
</protein>
<organism>
    <name type="scientific">Saccharomyces cerevisiae (strain ATCC 204508 / S288c)</name>
    <name type="common">Baker's yeast</name>
    <dbReference type="NCBI Taxonomy" id="559292"/>
    <lineage>
        <taxon>Eukaryota</taxon>
        <taxon>Fungi</taxon>
        <taxon>Dikarya</taxon>
        <taxon>Ascomycota</taxon>
        <taxon>Saccharomycotina</taxon>
        <taxon>Saccharomycetes</taxon>
        <taxon>Saccharomycetales</taxon>
        <taxon>Saccharomycetaceae</taxon>
        <taxon>Saccharomyces</taxon>
    </lineage>
</organism>
<reference key="1">
    <citation type="journal article" date="1997" name="Nature">
        <title>The nucleotide sequence of Saccharomyces cerevisiae chromosome IV.</title>
        <authorList>
            <person name="Jacq C."/>
            <person name="Alt-Moerbe J."/>
            <person name="Andre B."/>
            <person name="Arnold W."/>
            <person name="Bahr A."/>
            <person name="Ballesta J.P.G."/>
            <person name="Bargues M."/>
            <person name="Baron L."/>
            <person name="Becker A."/>
            <person name="Biteau N."/>
            <person name="Bloecker H."/>
            <person name="Blugeon C."/>
            <person name="Boskovic J."/>
            <person name="Brandt P."/>
            <person name="Brueckner M."/>
            <person name="Buitrago M.J."/>
            <person name="Coster F."/>
            <person name="Delaveau T."/>
            <person name="del Rey F."/>
            <person name="Dujon B."/>
            <person name="Eide L.G."/>
            <person name="Garcia-Cantalejo J.M."/>
            <person name="Goffeau A."/>
            <person name="Gomez-Peris A."/>
            <person name="Granotier C."/>
            <person name="Hanemann V."/>
            <person name="Hankeln T."/>
            <person name="Hoheisel J.D."/>
            <person name="Jaeger W."/>
            <person name="Jimenez A."/>
            <person name="Jonniaux J.-L."/>
            <person name="Kraemer C."/>
            <person name="Kuester H."/>
            <person name="Laamanen P."/>
            <person name="Legros Y."/>
            <person name="Louis E.J."/>
            <person name="Moeller-Rieker S."/>
            <person name="Monnet A."/>
            <person name="Moro M."/>
            <person name="Mueller-Auer S."/>
            <person name="Nussbaumer B."/>
            <person name="Paricio N."/>
            <person name="Paulin L."/>
            <person name="Perea J."/>
            <person name="Perez-Alonso M."/>
            <person name="Perez-Ortin J.E."/>
            <person name="Pohl T.M."/>
            <person name="Prydz H."/>
            <person name="Purnelle B."/>
            <person name="Rasmussen S.W."/>
            <person name="Remacha M.A."/>
            <person name="Revuelta J.L."/>
            <person name="Rieger M."/>
            <person name="Salom D."/>
            <person name="Saluz H.P."/>
            <person name="Saiz J.E."/>
            <person name="Saren A.-M."/>
            <person name="Schaefer M."/>
            <person name="Scharfe M."/>
            <person name="Schmidt E.R."/>
            <person name="Schneider C."/>
            <person name="Scholler P."/>
            <person name="Schwarz S."/>
            <person name="Soler-Mira A."/>
            <person name="Urrestarazu L.A."/>
            <person name="Verhasselt P."/>
            <person name="Vissers S."/>
            <person name="Voet M."/>
            <person name="Volckaert G."/>
            <person name="Wagner G."/>
            <person name="Wambutt R."/>
            <person name="Wedler E."/>
            <person name="Wedler H."/>
            <person name="Woelfl S."/>
            <person name="Harris D.E."/>
            <person name="Bowman S."/>
            <person name="Brown D."/>
            <person name="Churcher C.M."/>
            <person name="Connor R."/>
            <person name="Dedman K."/>
            <person name="Gentles S."/>
            <person name="Hamlin N."/>
            <person name="Hunt S."/>
            <person name="Jones L."/>
            <person name="McDonald S."/>
            <person name="Murphy L.D."/>
            <person name="Niblett D."/>
            <person name="Odell C."/>
            <person name="Oliver K."/>
            <person name="Rajandream M.A."/>
            <person name="Richards C."/>
            <person name="Shore L."/>
            <person name="Walsh S.V."/>
            <person name="Barrell B.G."/>
            <person name="Dietrich F.S."/>
            <person name="Mulligan J.T."/>
            <person name="Allen E."/>
            <person name="Araujo R."/>
            <person name="Aviles E."/>
            <person name="Berno A."/>
            <person name="Carpenter J."/>
            <person name="Chen E."/>
            <person name="Cherry J.M."/>
            <person name="Chung E."/>
            <person name="Duncan M."/>
            <person name="Hunicke-Smith S."/>
            <person name="Hyman R.W."/>
            <person name="Komp C."/>
            <person name="Lashkari D."/>
            <person name="Lew H."/>
            <person name="Lin D."/>
            <person name="Mosedale D."/>
            <person name="Nakahara K."/>
            <person name="Namath A."/>
            <person name="Oefner P."/>
            <person name="Oh C."/>
            <person name="Petel F.X."/>
            <person name="Roberts D."/>
            <person name="Schramm S."/>
            <person name="Schroeder M."/>
            <person name="Shogren T."/>
            <person name="Shroff N."/>
            <person name="Winant A."/>
            <person name="Yelton M.A."/>
            <person name="Botstein D."/>
            <person name="Davis R.W."/>
            <person name="Johnston M."/>
            <person name="Andrews S."/>
            <person name="Brinkman R."/>
            <person name="Cooper J."/>
            <person name="Ding H."/>
            <person name="Du Z."/>
            <person name="Favello A."/>
            <person name="Fulton L."/>
            <person name="Gattung S."/>
            <person name="Greco T."/>
            <person name="Hallsworth K."/>
            <person name="Hawkins J."/>
            <person name="Hillier L.W."/>
            <person name="Jier M."/>
            <person name="Johnson D."/>
            <person name="Johnston L."/>
            <person name="Kirsten J."/>
            <person name="Kucaba T."/>
            <person name="Langston Y."/>
            <person name="Latreille P."/>
            <person name="Le T."/>
            <person name="Mardis E."/>
            <person name="Menezes S."/>
            <person name="Miller N."/>
            <person name="Nhan M."/>
            <person name="Pauley A."/>
            <person name="Peluso D."/>
            <person name="Rifkin L."/>
            <person name="Riles L."/>
            <person name="Taich A."/>
            <person name="Trevaskis E."/>
            <person name="Vignati D."/>
            <person name="Wilcox L."/>
            <person name="Wohldman P."/>
            <person name="Vaudin M."/>
            <person name="Wilson R."/>
            <person name="Waterston R."/>
            <person name="Albermann K."/>
            <person name="Hani J."/>
            <person name="Heumann K."/>
            <person name="Kleine K."/>
            <person name="Mewes H.-W."/>
            <person name="Zollner A."/>
            <person name="Zaccaria P."/>
        </authorList>
    </citation>
    <scope>NUCLEOTIDE SEQUENCE [LARGE SCALE GENOMIC DNA]</scope>
    <source>
        <strain>ATCC 204508 / S288c</strain>
    </source>
</reference>
<reference key="2">
    <citation type="journal article" date="2014" name="G3 (Bethesda)">
        <title>The reference genome sequence of Saccharomyces cerevisiae: Then and now.</title>
        <authorList>
            <person name="Engel S.R."/>
            <person name="Dietrich F.S."/>
            <person name="Fisk D.G."/>
            <person name="Binkley G."/>
            <person name="Balakrishnan R."/>
            <person name="Costanzo M.C."/>
            <person name="Dwight S.S."/>
            <person name="Hitz B.C."/>
            <person name="Karra K."/>
            <person name="Nash R.S."/>
            <person name="Weng S."/>
            <person name="Wong E.D."/>
            <person name="Lloyd P."/>
            <person name="Skrzypek M.S."/>
            <person name="Miyasato S.R."/>
            <person name="Simison M."/>
            <person name="Cherry J.M."/>
        </authorList>
    </citation>
    <scope>GENOME REANNOTATION</scope>
    <scope>SEQUENCE REVISION TO 65</scope>
    <source>
        <strain>ATCC 204508 / S288c</strain>
    </source>
</reference>
<keyword id="KW-0472">Membrane</keyword>
<keyword id="KW-1185">Reference proteome</keyword>
<keyword id="KW-0812">Transmembrane</keyword>
<keyword id="KW-1133">Transmembrane helix</keyword>
<evidence type="ECO:0000255" key="1"/>
<evidence type="ECO:0000256" key="2">
    <source>
        <dbReference type="SAM" id="MobiDB-lite"/>
    </source>
</evidence>
<evidence type="ECO:0000305" key="3"/>
<gene>
    <name type="ordered locus">YDR215C</name>
    <name type="ORF">YD8142.15c</name>
    <name type="ORF">YD8142B.07c</name>
</gene>
<sequence>MKTPPNQEKNNEKISLLFSSQRLTIDVHPSSVYHIVLSSNNADRHQVTLSFTARSRMMPLTRARPFGNHSSMFRMFLDAMVILAVASGVSLPPQLPGRRSHNASTPGAKKPGKDHGAMVSEFPANGVITPVYFPLRW</sequence>
<proteinExistence type="predicted"/>
<dbReference type="EMBL" id="Z68194">
    <property type="protein sequence ID" value="CAA92358.1"/>
    <property type="status" value="ALT_FRAME"/>
    <property type="molecule type" value="Genomic_DNA"/>
</dbReference>
<dbReference type="EMBL" id="Z68195">
    <property type="protein sequence ID" value="CAA92366.1"/>
    <property type="status" value="ALT_FRAME"/>
    <property type="molecule type" value="Genomic_DNA"/>
</dbReference>
<dbReference type="EMBL" id="BK006938">
    <property type="protein sequence ID" value="DAA80279.1"/>
    <property type="molecule type" value="Genomic_DNA"/>
</dbReference>
<dbReference type="PIR" id="S61582">
    <property type="entry name" value="S61582"/>
</dbReference>
<dbReference type="RefSeq" id="NP_001335759.1">
    <property type="nucleotide sequence ID" value="NM_001348814.1"/>
</dbReference>
<dbReference type="DIP" id="DIP-1832N"/>
<dbReference type="FunCoup" id="Q12240">
    <property type="interactions" value="14"/>
</dbReference>
<dbReference type="IntAct" id="Q12240">
    <property type="interactions" value="2"/>
</dbReference>
<dbReference type="MINT" id="Q12240"/>
<dbReference type="STRING" id="4932.YDR215C"/>
<dbReference type="PaxDb" id="4932-YDR215C"/>
<dbReference type="EnsemblFungi" id="YDR215C_mRNA">
    <property type="protein sequence ID" value="YDR215C"/>
    <property type="gene ID" value="YDR215C"/>
</dbReference>
<dbReference type="GeneID" id="851801"/>
<dbReference type="AGR" id="SGD:S000002623"/>
<dbReference type="SGD" id="S000002623">
    <property type="gene designation" value="YDR215C"/>
</dbReference>
<dbReference type="HOGENOM" id="CLU_1866713_0_0_1"/>
<dbReference type="InParanoid" id="Q12240"/>
<dbReference type="OrthoDB" id="10311602at2759"/>
<dbReference type="PRO" id="PR:Q12240"/>
<dbReference type="Proteomes" id="UP000002311">
    <property type="component" value="Chromosome IV"/>
</dbReference>
<dbReference type="RNAct" id="Q12240">
    <property type="molecule type" value="protein"/>
</dbReference>
<dbReference type="GO" id="GO:0016020">
    <property type="term" value="C:membrane"/>
    <property type="evidence" value="ECO:0007669"/>
    <property type="project" value="UniProtKB-SubCell"/>
</dbReference>
<feature type="chain" id="PRO_0000299876" description="Uncharacterized protein YDR215C">
    <location>
        <begin position="1"/>
        <end position="137"/>
    </location>
</feature>
<feature type="transmembrane region" description="Helical" evidence="1">
    <location>
        <begin position="75"/>
        <end position="91"/>
    </location>
</feature>
<feature type="region of interest" description="Disordered" evidence="2">
    <location>
        <begin position="93"/>
        <end position="116"/>
    </location>
</feature>